<evidence type="ECO:0000250" key="1">
    <source>
        <dbReference type="UniProtKB" id="Q8N554"/>
    </source>
</evidence>
<evidence type="ECO:0000255" key="2">
    <source>
        <dbReference type="PROSITE-ProRule" id="PRU00042"/>
    </source>
</evidence>
<evidence type="ECO:0000255" key="3">
    <source>
        <dbReference type="PROSITE-ProRule" id="PRU01263"/>
    </source>
</evidence>
<evidence type="ECO:0000256" key="4">
    <source>
        <dbReference type="SAM" id="MobiDB-lite"/>
    </source>
</evidence>
<evidence type="ECO:0000269" key="5">
    <source>
    </source>
</evidence>
<evidence type="ECO:0000303" key="6">
    <source>
    </source>
</evidence>
<evidence type="ECO:0000305" key="7"/>
<organism>
    <name type="scientific">Mus musculus</name>
    <name type="common">Mouse</name>
    <dbReference type="NCBI Taxonomy" id="10090"/>
    <lineage>
        <taxon>Eukaryota</taxon>
        <taxon>Metazoa</taxon>
        <taxon>Chordata</taxon>
        <taxon>Craniata</taxon>
        <taxon>Vertebrata</taxon>
        <taxon>Euteleostomi</taxon>
        <taxon>Mammalia</taxon>
        <taxon>Eutheria</taxon>
        <taxon>Euarchontoglires</taxon>
        <taxon>Glires</taxon>
        <taxon>Rodentia</taxon>
        <taxon>Myomorpha</taxon>
        <taxon>Muroidea</taxon>
        <taxon>Muridae</taxon>
        <taxon>Murinae</taxon>
        <taxon>Mus</taxon>
        <taxon>Mus</taxon>
    </lineage>
</organism>
<protein>
    <recommendedName>
        <fullName>Zinc finger protein 276</fullName>
        <shortName>Zfp-276</shortName>
    </recommendedName>
</protein>
<comment type="function">
    <text>May be involved in transcriptional regulation.</text>
</comment>
<comment type="subcellular location">
    <subcellularLocation>
        <location evidence="7">Nucleus</location>
    </subcellularLocation>
    <subcellularLocation>
        <location evidence="1">Chromosome</location>
        <location evidence="1">Centromere</location>
        <location evidence="1">Kinetochore</location>
    </subcellularLocation>
</comment>
<comment type="alternative products">
    <event type="alternative splicing"/>
    <isoform>
        <id>Q8CE64-1</id>
        <name>1</name>
        <sequence type="displayed"/>
    </isoform>
    <isoform>
        <id>Q8CE64-2</id>
        <name>2</name>
        <sequence type="described" ref="VSP_026106 VSP_026107"/>
    </isoform>
</comment>
<comment type="tissue specificity">
    <text evidence="5">Found in all the examined tissues, with highest levels in kidney, liver, lung, and spleen.</text>
</comment>
<comment type="developmental stage">
    <text evidence="5">Expressed at low levels in all stages of embryonic development examined.</text>
</comment>
<comment type="sequence caution" evidence="7">
    <conflict type="erroneous initiation">
        <sequence resource="EMBL-CDS" id="AAG01634"/>
    </conflict>
    <text>Truncated N-terminus.</text>
</comment>
<comment type="sequence caution" evidence="7">
    <conflict type="erroneous initiation">
        <sequence resource="EMBL-CDS" id="BAC31505"/>
    </conflict>
    <text>Truncated N-terminus.</text>
</comment>
<dbReference type="EMBL" id="AK028939">
    <property type="protein sequence ID" value="BAC26204.1"/>
    <property type="molecule type" value="mRNA"/>
</dbReference>
<dbReference type="EMBL" id="AK043258">
    <property type="protein sequence ID" value="BAC31505.1"/>
    <property type="status" value="ALT_INIT"/>
    <property type="molecule type" value="mRNA"/>
</dbReference>
<dbReference type="EMBL" id="AK133363">
    <property type="protein sequence ID" value="BAE21616.1"/>
    <property type="molecule type" value="mRNA"/>
</dbReference>
<dbReference type="EMBL" id="AK163486">
    <property type="protein sequence ID" value="BAE37365.1"/>
    <property type="molecule type" value="mRNA"/>
</dbReference>
<dbReference type="EMBL" id="AF178935">
    <property type="protein sequence ID" value="AAG01634.1"/>
    <property type="status" value="ALT_INIT"/>
    <property type="molecule type" value="mRNA"/>
</dbReference>
<dbReference type="CCDS" id="CCDS52699.1">
    <molecule id="Q8CE64-1"/>
</dbReference>
<dbReference type="RefSeq" id="NP_065243.2">
    <molecule id="Q8CE64-1"/>
    <property type="nucleotide sequence ID" value="NM_020497.2"/>
</dbReference>
<dbReference type="SMR" id="Q8CE64"/>
<dbReference type="BioGRID" id="208217">
    <property type="interactions" value="17"/>
</dbReference>
<dbReference type="FunCoup" id="Q8CE64">
    <property type="interactions" value="931"/>
</dbReference>
<dbReference type="IntAct" id="Q8CE64">
    <property type="interactions" value="1"/>
</dbReference>
<dbReference type="STRING" id="10090.ENSMUSP00000001092"/>
<dbReference type="GlyGen" id="Q8CE64">
    <property type="glycosylation" value="1 site, 1 O-linked glycan (1 site)"/>
</dbReference>
<dbReference type="iPTMnet" id="Q8CE64"/>
<dbReference type="PhosphoSitePlus" id="Q8CE64"/>
<dbReference type="PaxDb" id="10090-ENSMUSP00000001092"/>
<dbReference type="PeptideAtlas" id="Q8CE64"/>
<dbReference type="ProteomicsDB" id="275069">
    <molecule id="Q8CE64-1"/>
</dbReference>
<dbReference type="ProteomicsDB" id="275070">
    <molecule id="Q8CE64-2"/>
</dbReference>
<dbReference type="Antibodypedia" id="17483">
    <property type="antibodies" value="133 antibodies from 21 providers"/>
</dbReference>
<dbReference type="DNASU" id="57247"/>
<dbReference type="Ensembl" id="ENSMUST00000001092.15">
    <molecule id="Q8CE64-1"/>
    <property type="protein sequence ID" value="ENSMUSP00000001092.9"/>
    <property type="gene ID" value="ENSMUSG00000001065.16"/>
</dbReference>
<dbReference type="GeneID" id="57247"/>
<dbReference type="KEGG" id="mmu:57247"/>
<dbReference type="UCSC" id="uc009nva.2">
    <molecule id="Q8CE64-2"/>
    <property type="organism name" value="mouse"/>
</dbReference>
<dbReference type="UCSC" id="uc009nvb.2">
    <molecule id="Q8CE64-1"/>
    <property type="organism name" value="mouse"/>
</dbReference>
<dbReference type="AGR" id="MGI:1888495"/>
<dbReference type="CTD" id="57247"/>
<dbReference type="MGI" id="MGI:1888495">
    <property type="gene designation" value="Zfp276"/>
</dbReference>
<dbReference type="VEuPathDB" id="HostDB:ENSMUSG00000001065"/>
<dbReference type="eggNOG" id="KOG1721">
    <property type="taxonomic scope" value="Eukaryota"/>
</dbReference>
<dbReference type="GeneTree" id="ENSGT00940000158841"/>
<dbReference type="HOGENOM" id="CLU_040755_0_0_1"/>
<dbReference type="InParanoid" id="Q8CE64"/>
<dbReference type="OMA" id="LAVKWAW"/>
<dbReference type="OrthoDB" id="8823111at2759"/>
<dbReference type="PhylomeDB" id="Q8CE64"/>
<dbReference type="TreeFam" id="TF332664"/>
<dbReference type="BioGRID-ORCS" id="57247">
    <property type="hits" value="1 hit in 76 CRISPR screens"/>
</dbReference>
<dbReference type="PRO" id="PR:Q8CE64"/>
<dbReference type="Proteomes" id="UP000000589">
    <property type="component" value="Chromosome 8"/>
</dbReference>
<dbReference type="RNAct" id="Q8CE64">
    <property type="molecule type" value="protein"/>
</dbReference>
<dbReference type="Bgee" id="ENSMUSG00000001065">
    <property type="expression patterns" value="Expressed in granulocyte and 199 other cell types or tissues"/>
</dbReference>
<dbReference type="ExpressionAtlas" id="Q8CE64">
    <property type="expression patterns" value="baseline and differential"/>
</dbReference>
<dbReference type="GO" id="GO:0000776">
    <property type="term" value="C:kinetochore"/>
    <property type="evidence" value="ECO:0000250"/>
    <property type="project" value="UniProtKB"/>
</dbReference>
<dbReference type="GO" id="GO:0005634">
    <property type="term" value="C:nucleus"/>
    <property type="evidence" value="ECO:0007669"/>
    <property type="project" value="UniProtKB-SubCell"/>
</dbReference>
<dbReference type="GO" id="GO:1990837">
    <property type="term" value="F:sequence-specific double-stranded DNA binding"/>
    <property type="evidence" value="ECO:0007669"/>
    <property type="project" value="Ensembl"/>
</dbReference>
<dbReference type="GO" id="GO:0008270">
    <property type="term" value="F:zinc ion binding"/>
    <property type="evidence" value="ECO:0007669"/>
    <property type="project" value="UniProtKB-KW"/>
</dbReference>
<dbReference type="FunFam" id="3.30.160.60:FF:000219">
    <property type="entry name" value="Zinc finger protein 276"/>
    <property type="match status" value="1"/>
</dbReference>
<dbReference type="FunFam" id="3.30.160.60:FF:000400">
    <property type="entry name" value="Zinc finger protein 276"/>
    <property type="match status" value="1"/>
</dbReference>
<dbReference type="FunFam" id="3.30.160.60:FF:000503">
    <property type="entry name" value="Zinc finger protein 276"/>
    <property type="match status" value="1"/>
</dbReference>
<dbReference type="Gene3D" id="3.30.160.60">
    <property type="entry name" value="Classic Zinc Finger"/>
    <property type="match status" value="4"/>
</dbReference>
<dbReference type="InterPro" id="IPR012934">
    <property type="entry name" value="Znf_AD"/>
</dbReference>
<dbReference type="InterPro" id="IPR036236">
    <property type="entry name" value="Znf_C2H2_sf"/>
</dbReference>
<dbReference type="InterPro" id="IPR013087">
    <property type="entry name" value="Znf_C2H2_type"/>
</dbReference>
<dbReference type="PANTHER" id="PTHR24379:SF121">
    <property type="entry name" value="C2H2-TYPE DOMAIN-CONTAINING PROTEIN"/>
    <property type="match status" value="1"/>
</dbReference>
<dbReference type="PANTHER" id="PTHR24379">
    <property type="entry name" value="KRAB AND ZINC FINGER DOMAIN-CONTAINING"/>
    <property type="match status" value="1"/>
</dbReference>
<dbReference type="Pfam" id="PF07776">
    <property type="entry name" value="zf-AD"/>
    <property type="match status" value="1"/>
</dbReference>
<dbReference type="Pfam" id="PF00096">
    <property type="entry name" value="zf-C2H2"/>
    <property type="match status" value="2"/>
</dbReference>
<dbReference type="SMART" id="SM00355">
    <property type="entry name" value="ZnF_C2H2"/>
    <property type="match status" value="5"/>
</dbReference>
<dbReference type="SUPFAM" id="SSF57667">
    <property type="entry name" value="beta-beta-alpha zinc fingers"/>
    <property type="match status" value="2"/>
</dbReference>
<dbReference type="PROSITE" id="PS51915">
    <property type="entry name" value="ZAD"/>
    <property type="match status" value="1"/>
</dbReference>
<dbReference type="PROSITE" id="PS00028">
    <property type="entry name" value="ZINC_FINGER_C2H2_1"/>
    <property type="match status" value="5"/>
</dbReference>
<dbReference type="PROSITE" id="PS50157">
    <property type="entry name" value="ZINC_FINGER_C2H2_2"/>
    <property type="match status" value="4"/>
</dbReference>
<proteinExistence type="evidence at protein level"/>
<name>ZN276_MOUSE</name>
<sequence>MKRDRLGRFLSPGIARQRGGSGGGCGSGRTRGRPSRSGGTSADGAAAQLSWGSMTRSCGDTGDDGTDEAGAGRTLAMGHCRLCHGKFSSRSLRSISDRVPGETSERLSPGERVFIRDFQRLLGVAVHQDPALPQSVCKNCYTQFYQCHSLLRTFLQRVNVSPAGQRKPCTKVGVQPTTVAEEGACVADLIASSPRCLHGLVGWVHEHAVSCGSLPSLQRTLSSEYCGIIQAVWGCDQGHDFTMDTASSCRALFLDSALAVKWAWGKDLSPRLAQNSESNPTGAASRLCQARETQVGSETKTLPSVDVALLHSHGDSVGPGLGPCTQPHLAPSEAPGQLGETQVPSSTSDDRVKDEFSDLSEGDFLSEDESDKKQTPQSSDESFEPYPEKKVSGKKSEGREAKRPEEPKIRKKPGPKPGWKKKLRCEREELPTIYKCPYQGCTAVYRGADGMKKHIKEHHEEVRERPCPHPGCNKVFMIDRYLQRHVKLIHTEVRNYICDECGQTFKQRKHLLVHQMRHSGAKPLQCEVCGFQCRQRASLKYHMTKHKAETELDFACDQCGRRFEKAHNLNVHMSMVHPLTQAQDRALPLEAEPPPGPLSPSGTMEGQAVKPEPT</sequence>
<keyword id="KW-0025">Alternative splicing</keyword>
<keyword id="KW-0137">Centromere</keyword>
<keyword id="KW-0158">Chromosome</keyword>
<keyword id="KW-0238">DNA-binding</keyword>
<keyword id="KW-0995">Kinetochore</keyword>
<keyword id="KW-0479">Metal-binding</keyword>
<keyword id="KW-0539">Nucleus</keyword>
<keyword id="KW-1185">Reference proteome</keyword>
<keyword id="KW-0677">Repeat</keyword>
<keyword id="KW-0804">Transcription</keyword>
<keyword id="KW-0805">Transcription regulation</keyword>
<keyword id="KW-0862">Zinc</keyword>
<keyword id="KW-0863">Zinc-finger</keyword>
<reference key="1">
    <citation type="journal article" date="2005" name="Science">
        <title>The transcriptional landscape of the mammalian genome.</title>
        <authorList>
            <person name="Carninci P."/>
            <person name="Kasukawa T."/>
            <person name="Katayama S."/>
            <person name="Gough J."/>
            <person name="Frith M.C."/>
            <person name="Maeda N."/>
            <person name="Oyama R."/>
            <person name="Ravasi T."/>
            <person name="Lenhard B."/>
            <person name="Wells C."/>
            <person name="Kodzius R."/>
            <person name="Shimokawa K."/>
            <person name="Bajic V.B."/>
            <person name="Brenner S.E."/>
            <person name="Batalov S."/>
            <person name="Forrest A.R."/>
            <person name="Zavolan M."/>
            <person name="Davis M.J."/>
            <person name="Wilming L.G."/>
            <person name="Aidinis V."/>
            <person name="Allen J.E."/>
            <person name="Ambesi-Impiombato A."/>
            <person name="Apweiler R."/>
            <person name="Aturaliya R.N."/>
            <person name="Bailey T.L."/>
            <person name="Bansal M."/>
            <person name="Baxter L."/>
            <person name="Beisel K.W."/>
            <person name="Bersano T."/>
            <person name="Bono H."/>
            <person name="Chalk A.M."/>
            <person name="Chiu K.P."/>
            <person name="Choudhary V."/>
            <person name="Christoffels A."/>
            <person name="Clutterbuck D.R."/>
            <person name="Crowe M.L."/>
            <person name="Dalla E."/>
            <person name="Dalrymple B.P."/>
            <person name="de Bono B."/>
            <person name="Della Gatta G."/>
            <person name="di Bernardo D."/>
            <person name="Down T."/>
            <person name="Engstrom P."/>
            <person name="Fagiolini M."/>
            <person name="Faulkner G."/>
            <person name="Fletcher C.F."/>
            <person name="Fukushima T."/>
            <person name="Furuno M."/>
            <person name="Futaki S."/>
            <person name="Gariboldi M."/>
            <person name="Georgii-Hemming P."/>
            <person name="Gingeras T.R."/>
            <person name="Gojobori T."/>
            <person name="Green R.E."/>
            <person name="Gustincich S."/>
            <person name="Harbers M."/>
            <person name="Hayashi Y."/>
            <person name="Hensch T.K."/>
            <person name="Hirokawa N."/>
            <person name="Hill D."/>
            <person name="Huminiecki L."/>
            <person name="Iacono M."/>
            <person name="Ikeo K."/>
            <person name="Iwama A."/>
            <person name="Ishikawa T."/>
            <person name="Jakt M."/>
            <person name="Kanapin A."/>
            <person name="Katoh M."/>
            <person name="Kawasawa Y."/>
            <person name="Kelso J."/>
            <person name="Kitamura H."/>
            <person name="Kitano H."/>
            <person name="Kollias G."/>
            <person name="Krishnan S.P."/>
            <person name="Kruger A."/>
            <person name="Kummerfeld S.K."/>
            <person name="Kurochkin I.V."/>
            <person name="Lareau L.F."/>
            <person name="Lazarevic D."/>
            <person name="Lipovich L."/>
            <person name="Liu J."/>
            <person name="Liuni S."/>
            <person name="McWilliam S."/>
            <person name="Madan Babu M."/>
            <person name="Madera M."/>
            <person name="Marchionni L."/>
            <person name="Matsuda H."/>
            <person name="Matsuzawa S."/>
            <person name="Miki H."/>
            <person name="Mignone F."/>
            <person name="Miyake S."/>
            <person name="Morris K."/>
            <person name="Mottagui-Tabar S."/>
            <person name="Mulder N."/>
            <person name="Nakano N."/>
            <person name="Nakauchi H."/>
            <person name="Ng P."/>
            <person name="Nilsson R."/>
            <person name="Nishiguchi S."/>
            <person name="Nishikawa S."/>
            <person name="Nori F."/>
            <person name="Ohara O."/>
            <person name="Okazaki Y."/>
            <person name="Orlando V."/>
            <person name="Pang K.C."/>
            <person name="Pavan W.J."/>
            <person name="Pavesi G."/>
            <person name="Pesole G."/>
            <person name="Petrovsky N."/>
            <person name="Piazza S."/>
            <person name="Reed J."/>
            <person name="Reid J.F."/>
            <person name="Ring B.Z."/>
            <person name="Ringwald M."/>
            <person name="Rost B."/>
            <person name="Ruan Y."/>
            <person name="Salzberg S.L."/>
            <person name="Sandelin A."/>
            <person name="Schneider C."/>
            <person name="Schoenbach C."/>
            <person name="Sekiguchi K."/>
            <person name="Semple C.A."/>
            <person name="Seno S."/>
            <person name="Sessa L."/>
            <person name="Sheng Y."/>
            <person name="Shibata Y."/>
            <person name="Shimada H."/>
            <person name="Shimada K."/>
            <person name="Silva D."/>
            <person name="Sinclair B."/>
            <person name="Sperling S."/>
            <person name="Stupka E."/>
            <person name="Sugiura K."/>
            <person name="Sultana R."/>
            <person name="Takenaka Y."/>
            <person name="Taki K."/>
            <person name="Tammoja K."/>
            <person name="Tan S.L."/>
            <person name="Tang S."/>
            <person name="Taylor M.S."/>
            <person name="Tegner J."/>
            <person name="Teichmann S.A."/>
            <person name="Ueda H.R."/>
            <person name="van Nimwegen E."/>
            <person name="Verardo R."/>
            <person name="Wei C.L."/>
            <person name="Yagi K."/>
            <person name="Yamanishi H."/>
            <person name="Zabarovsky E."/>
            <person name="Zhu S."/>
            <person name="Zimmer A."/>
            <person name="Hide W."/>
            <person name="Bult C."/>
            <person name="Grimmond S.M."/>
            <person name="Teasdale R.D."/>
            <person name="Liu E.T."/>
            <person name="Brusic V."/>
            <person name="Quackenbush J."/>
            <person name="Wahlestedt C."/>
            <person name="Mattick J.S."/>
            <person name="Hume D.A."/>
            <person name="Kai C."/>
            <person name="Sasaki D."/>
            <person name="Tomaru Y."/>
            <person name="Fukuda S."/>
            <person name="Kanamori-Katayama M."/>
            <person name="Suzuki M."/>
            <person name="Aoki J."/>
            <person name="Arakawa T."/>
            <person name="Iida J."/>
            <person name="Imamura K."/>
            <person name="Itoh M."/>
            <person name="Kato T."/>
            <person name="Kawaji H."/>
            <person name="Kawagashira N."/>
            <person name="Kawashima T."/>
            <person name="Kojima M."/>
            <person name="Kondo S."/>
            <person name="Konno H."/>
            <person name="Nakano K."/>
            <person name="Ninomiya N."/>
            <person name="Nishio T."/>
            <person name="Okada M."/>
            <person name="Plessy C."/>
            <person name="Shibata K."/>
            <person name="Shiraki T."/>
            <person name="Suzuki S."/>
            <person name="Tagami M."/>
            <person name="Waki K."/>
            <person name="Watahiki A."/>
            <person name="Okamura-Oho Y."/>
            <person name="Suzuki H."/>
            <person name="Kawai J."/>
            <person name="Hayashizaki Y."/>
        </authorList>
    </citation>
    <scope>NUCLEOTIDE SEQUENCE [LARGE SCALE MRNA] (ISOFORMS 1 AND 2)</scope>
    <source>
        <strain>C57BL/6J</strain>
        <tissue>Cerebellum</tissue>
        <tissue>Corpora quadrigemina</tissue>
        <tissue>Skin</tissue>
        <tissue>Testis</tissue>
    </source>
</reference>
<reference key="2">
    <citation type="journal article" date="2000" name="Genomics">
        <title>Cloning and analysis of the mouse Fanconi anemia group A cDNA and an overlapping penta zinc finger cDNA.</title>
        <authorList>
            <person name="Wong J.C."/>
            <person name="Alon N."/>
            <person name="Norga K."/>
            <person name="Kruyt F.A.E."/>
            <person name="Youssoufian H."/>
            <person name="Buchwald M."/>
        </authorList>
    </citation>
    <scope>NUCLEOTIDE SEQUENCE [MRNA] OF 149-614 (ISOFORM 1)</scope>
    <scope>TISSUE SPECIFICITY</scope>
    <scope>DEVELOPMENTAL STAGE</scope>
    <source>
        <strain>C57BL/6J</strain>
    </source>
</reference>
<reference key="3">
    <citation type="journal article" date="2014" name="Mol. Cell. Proteomics">
        <title>Immunoaffinity enrichment and mass spectrometry analysis of protein methylation.</title>
        <authorList>
            <person name="Guo A."/>
            <person name="Gu H."/>
            <person name="Zhou J."/>
            <person name="Mulhern D."/>
            <person name="Wang Y."/>
            <person name="Lee K.A."/>
            <person name="Yang V."/>
            <person name="Aguiar M."/>
            <person name="Kornhauser J."/>
            <person name="Jia X."/>
            <person name="Ren J."/>
            <person name="Beausoleil S.A."/>
            <person name="Silva J.C."/>
            <person name="Vemulapalli V."/>
            <person name="Bedford M.T."/>
            <person name="Comb M.J."/>
        </authorList>
    </citation>
    <scope>IDENTIFICATION BY MASS SPECTROMETRY [LARGE SCALE ANALYSIS]</scope>
    <source>
        <tissue>Brain</tissue>
    </source>
</reference>
<gene>
    <name type="primary">Znf276</name>
    <name type="synonym">Zfp276</name>
</gene>
<feature type="chain" id="PRO_0000047324" description="Zinc finger protein 276">
    <location>
        <begin position="1"/>
        <end position="614"/>
    </location>
</feature>
<feature type="domain" description="ZAD" evidence="3">
    <location>
        <begin position="78"/>
        <end position="164"/>
    </location>
</feature>
<feature type="zinc finger region" description="C2H2-type 1" evidence="2">
    <location>
        <begin position="434"/>
        <end position="458"/>
    </location>
</feature>
<feature type="zinc finger region" description="C2H2-type 2" evidence="2">
    <location>
        <begin position="465"/>
        <end position="490"/>
    </location>
</feature>
<feature type="zinc finger region" description="C2H2-type 3" evidence="2">
    <location>
        <begin position="496"/>
        <end position="518"/>
    </location>
</feature>
<feature type="zinc finger region" description="C2H2-type 4" evidence="2">
    <location>
        <begin position="524"/>
        <end position="546"/>
    </location>
</feature>
<feature type="zinc finger region" description="C2H2-type 5" evidence="2">
    <location>
        <begin position="554"/>
        <end position="577"/>
    </location>
</feature>
<feature type="region of interest" description="Disordered" evidence="4">
    <location>
        <begin position="1"/>
        <end position="46"/>
    </location>
</feature>
<feature type="region of interest" description="Disordered" evidence="4">
    <location>
        <begin position="271"/>
        <end position="422"/>
    </location>
</feature>
<feature type="region of interest" description="Disordered" evidence="4">
    <location>
        <begin position="588"/>
        <end position="614"/>
    </location>
</feature>
<feature type="compositionally biased region" description="Gly residues" evidence="4">
    <location>
        <begin position="19"/>
        <end position="29"/>
    </location>
</feature>
<feature type="compositionally biased region" description="Polar residues" evidence="4">
    <location>
        <begin position="272"/>
        <end position="282"/>
    </location>
</feature>
<feature type="compositionally biased region" description="Polar residues" evidence="4">
    <location>
        <begin position="291"/>
        <end position="302"/>
    </location>
</feature>
<feature type="compositionally biased region" description="Acidic residues" evidence="4">
    <location>
        <begin position="357"/>
        <end position="369"/>
    </location>
</feature>
<feature type="compositionally biased region" description="Basic and acidic residues" evidence="4">
    <location>
        <begin position="386"/>
        <end position="408"/>
    </location>
</feature>
<feature type="compositionally biased region" description="Basic residues" evidence="4">
    <location>
        <begin position="409"/>
        <end position="422"/>
    </location>
</feature>
<feature type="binding site" evidence="3">
    <location>
        <position position="80"/>
    </location>
    <ligand>
        <name>Zn(2+)</name>
        <dbReference type="ChEBI" id="CHEBI:29105"/>
    </ligand>
</feature>
<feature type="binding site" evidence="3">
    <location>
        <position position="83"/>
    </location>
    <ligand>
        <name>Zn(2+)</name>
        <dbReference type="ChEBI" id="CHEBI:29105"/>
    </ligand>
</feature>
<feature type="binding site" evidence="3">
    <location>
        <position position="137"/>
    </location>
    <ligand>
        <name>Zn(2+)</name>
        <dbReference type="ChEBI" id="CHEBI:29105"/>
    </ligand>
</feature>
<feature type="binding site" evidence="3">
    <location>
        <position position="140"/>
    </location>
    <ligand>
        <name>Zn(2+)</name>
        <dbReference type="ChEBI" id="CHEBI:29105"/>
    </ligand>
</feature>
<feature type="splice variant" id="VSP_026106" description="In isoform 2." evidence="6">
    <original>QLGETQVPSSTSDD</original>
    <variation>KQHLWLMLEQDSVF</variation>
    <location>
        <begin position="337"/>
        <end position="350"/>
    </location>
</feature>
<feature type="splice variant" id="VSP_026107" description="In isoform 2." evidence="6">
    <location>
        <begin position="351"/>
        <end position="614"/>
    </location>
</feature>
<feature type="sequence conflict" description="In Ref. 1; BAC26204." evidence="7" ref="1">
    <original>K</original>
    <variation>R</variation>
    <location>
        <position position="353"/>
    </location>
</feature>
<feature type="sequence conflict" description="In Ref. 2; AAG01634." evidence="7" ref="2">
    <original>KH</original>
    <variation>ND</variation>
    <location>
        <begin position="509"/>
        <end position="510"/>
    </location>
</feature>
<feature type="sequence conflict" description="In Ref. 2; AAG01634." evidence="7" ref="2">
    <original>A</original>
    <variation>G</variation>
    <location>
        <position position="521"/>
    </location>
</feature>
<feature type="sequence conflict" description="In Ref. 2; AAG01634." evidence="7" ref="2">
    <original>L</original>
    <variation>W</variation>
    <location>
        <position position="579"/>
    </location>
</feature>
<accession>Q8CE64</accession>
<accession>Q3TQL7</accession>
<accession>Q3V088</accession>
<accession>Q80ZN3</accession>
<accession>Q8C912</accession>
<accession>Q9ESV2</accession>